<name>LGG2_CAEEL</name>
<comment type="function">
    <text evidence="2 3 4 5 6 7 8">Ubiquitin-like modifier involved in the formation of autophagosomal vacuoles (autophagosomes) (PubMed:26687600). When lipidated mediates tethering between adjacent membranes and stimulates membrane fusion (PubMed:26687600). Less effective at promoting membrane fusion than lgg-1 (PubMed:26687600). Acts upstream of the autophagy protein epg-5 in the aggrephagy pathway, which is the macroautophagic degradation of ubiquitinated protein aggregates, and preferentially interacts with autophagy proteins and substrates containing LIR motifs to mediate autophagosome formation and protein aggregate degradation (PubMed:26687600). In particular binds to components of an atg-5-lgg-3-atg-16 complex to regulate autophagosome formation and cargo sequestration (PubMed:26687600). Required for the degradation of specific sqst-1-containing aggregates during embryogenesis and the early stages of larval development (PubMed:26687600). Involved in allophagy, which is an autophagic process in which paternal mitochondria and organelles are degraded during fertilization, and moreover is required for the degradation of lgg-1-positive allophagic autophagosomes in embryos (PubMed:24374177, PubMed:25126728, PubMed:37395461). Involved in xenophagy, the autophagy-mediated degradation of pathogens and pathogen products, such as toxins (PubMed:27875098). Also plays a role in membrane-pore repair (PubMed:27875098). Through HOPS complex subunit vps-39, tethers lysosomes with autophagosomes to form autolysosomes (PubMed:24374177). Plays a role in the distribution and clearance of germ cell specific P-granules from somatic cells to ensure exclusive localization of the P-granules in germ cells (PubMed:19167332). Essential for dauer development and life-span extension (PubMed:20523114).</text>
</comment>
<comment type="subunit">
    <text evidence="4 6">May interact with vps-39 (PubMed:24374177). Interacts with lgg-3; the interaction is direct (PubMed:26687600). Interacts with atg-16.1 (via WD domain) and atg-16.2 (via WD 5-6 repeats); the interactions are direct (PubMed:26687600). Interacts with sepa-1 (via the LIR motifs); the interaction is direct (PubMed:26687600). Interacts with sqst-1 (via the LIR motifs); the interaction is direct (PubMed:26687600). Interacts with epg-2 (via the LIR motifs); the interaction is weak (PubMed:26687600). Interacts with atg-7; the interaction is direct (PubMed:26687600). Interacts with atg-3 (PubMed:26687600). The interaction with atg-7 and atg-3 may be required for the lipidation of lgg-2 (PubMed:26687600).</text>
</comment>
<comment type="interaction">
    <interactant intactId="EBI-331856">
        <id>Q23536</id>
    </interactant>
    <interactant intactId="EBI-331850">
        <id>K8ESC5-2</id>
        <label>atg-4.1</label>
    </interactant>
    <organismsDiffer>false</organismsDiffer>
    <experiments>3</experiments>
</comment>
<comment type="subcellular location">
    <subcellularLocation>
        <location evidence="3 4 8">Cytoplasmic vesicle</location>
        <location evidence="3 4 8">Autophagosome</location>
    </subcellularLocation>
    <subcellularLocation>
        <location evidence="4">Cytoplasm</location>
    </subcellularLocation>
    <subcellularLocation>
        <location evidence="10">Cell membrane</location>
        <topology evidence="10">Lipid-anchor</topology>
    </subcellularLocation>
    <text evidence="4">In embryos, diffuse cytoplasmic localization with some areas displaying a more punctate distribution (PubMed:24374177). Specifically, upon fertilization localizes to autophagosomes around the male pronucleus. During the first embryonic divisions and after the 25-cell stage, localizes to a small population of autophagosomes and to another small population of autophagosomes containing both lgg-1 and lgg-2. Localization to autophagosomes is dependent on atg-7.</text>
</comment>
<comment type="developmental stage">
    <text evidence="4 6 8">Expressed during embryogenesis.</text>
</comment>
<comment type="PTM">
    <text evidence="6">This protein is subject to lipidation (PubMed:26687600). Lipidation is regulated by lgg-1 (PubMed:26687600).</text>
</comment>
<comment type="disruption phenotype">
    <text evidence="2 4 5 7 8">Viable with no visible defects in development or fertility (PubMed:24374177, PubMed:37395461). Embryos contain an increased number of endosomes (PubMed:25126728). Lysosomes have a reduced capacity to interact with autophagosomes in embryos and furthermore, there is defective autophagosome degradation with an accumulation of lgg-1-positive autophagosomes in 500-cell embryos (PubMed:24374177). Double knockout with rab-7 partially rescues the defective lgg-1- and lgg-2-positive autophagosome degradation defect in the individual rab-7 and lgg-2 single mutants (PubMed:24374177). RNAi-mediated knockdown results in the accumulation of germ cell specific P-granules in somatic cells as indicated by increased numbers of pgl-1 positive granules in embryos (PubMed:19167332). RNAi-mediated knockdown reduces autophagic degradation of membrane pore-forming toxin Cry5B.</text>
</comment>
<comment type="similarity">
    <text evidence="9">Belongs to the ATG8 family.</text>
</comment>
<organism>
    <name type="scientific">Caenorhabditis elegans</name>
    <dbReference type="NCBI Taxonomy" id="6239"/>
    <lineage>
        <taxon>Eukaryota</taxon>
        <taxon>Metazoa</taxon>
        <taxon>Ecdysozoa</taxon>
        <taxon>Nematoda</taxon>
        <taxon>Chromadorea</taxon>
        <taxon>Rhabditida</taxon>
        <taxon>Rhabditina</taxon>
        <taxon>Rhabditomorpha</taxon>
        <taxon>Rhabditoidea</taxon>
        <taxon>Rhabditidae</taxon>
        <taxon>Peloderinae</taxon>
        <taxon>Caenorhabditis</taxon>
    </lineage>
</organism>
<sequence length="130" mass="15095">MSGNRGGSYISGIVPSFKERRPFHERQKDVEEIRSQQPNKVPVIIERFDGERSLPLMDRCKFLVPEHITVAELMSIVRRRLQLHPQQAFFLLVNERSMVSNSMSMSNLYSQERDPDGFVYMVYTSQPAFG</sequence>
<gene>
    <name evidence="11" type="primary">lgg-2</name>
    <name evidence="11" type="ORF">ZK593.6</name>
</gene>
<reference key="1">
    <citation type="journal article" date="1998" name="Science">
        <title>Genome sequence of the nematode C. elegans: a platform for investigating biology.</title>
        <authorList>
            <consortium name="The C. elegans sequencing consortium"/>
        </authorList>
    </citation>
    <scope>NUCLEOTIDE SEQUENCE [LARGE SCALE GENOMIC DNA]</scope>
    <source>
        <strain>Bristol N2</strain>
    </source>
</reference>
<reference key="2">
    <citation type="journal article" date="2009" name="Cell">
        <title>SEPA-1 mediates the specific recognition and degradation of P granule components by autophagy in C. elegans.</title>
        <authorList>
            <person name="Zhang Y."/>
            <person name="Yan L."/>
            <person name="Zhou Z."/>
            <person name="Yang P."/>
            <person name="Tian E."/>
            <person name="Zhang K."/>
            <person name="Zhao Y."/>
            <person name="Li Z."/>
            <person name="Song B."/>
            <person name="Han J."/>
            <person name="Miao L."/>
            <person name="Zhang H."/>
        </authorList>
    </citation>
    <scope>FUNCTION</scope>
    <scope>DISRUPTION PHENOTYPE</scope>
</reference>
<reference key="3">
    <citation type="journal article" date="2010" name="Autophagy">
        <title>The autophagosomal protein LGG-2 acts synergistically with LGG-1 in dauer formation and longevity in C. elegans.</title>
        <authorList>
            <person name="Alberti A."/>
            <person name="Michelet X."/>
            <person name="Djeddi A."/>
            <person name="Legouis R."/>
        </authorList>
    </citation>
    <scope>FUNCTION</scope>
    <scope>SUBCELLULAR LOCATION</scope>
</reference>
<reference key="4">
    <citation type="journal article" date="2014" name="Autophagy">
        <title>Human GABARAP can restore autophagosome biogenesis in a C. elegans lgg-1 mutant.</title>
        <authorList>
            <person name="Jenzer C."/>
            <person name="Manil-Segalen M."/>
            <person name="Lefebvre C."/>
            <person name="Largeau C."/>
            <person name="Glatigny A."/>
            <person name="Legouis R."/>
        </authorList>
    </citation>
    <scope>FUNCTION</scope>
    <scope>DISRUPTION PHENOTYPE</scope>
</reference>
<reference key="5">
    <citation type="journal article" date="2014" name="Dev. Cell">
        <title>The C. elegans LC3 acts downstream of GABARAP to degrade autophagosomes by interacting with the HOPS subunit VPS39.</title>
        <authorList>
            <person name="Manil-Segalen M."/>
            <person name="Lefebvre C."/>
            <person name="Jenzer C."/>
            <person name="Trichet M."/>
            <person name="Boulogne C."/>
            <person name="Satiat-Jeunemaitre B."/>
            <person name="Legouis R."/>
        </authorList>
    </citation>
    <scope>FUNCTION</scope>
    <scope>INTERACTION WITH VPS-39</scope>
    <scope>SUBCELLULAR LOCATION</scope>
    <scope>DEVELOPMENTAL STAGE</scope>
    <scope>DISRUPTION PHENOTYPE</scope>
    <scope>MUTAGENESIS OF GLY-130</scope>
</reference>
<reference key="6">
    <citation type="journal article" date="2017" name="Autophagy">
        <title>HLH-30/TFEB-mediated autophagy functions in a cell-autonomous manner for epithelium intrinsic cellular defense against bacterial pore-forming toxin in C. elegans.</title>
        <authorList>
            <person name="Chen H.D."/>
            <person name="Kao C.Y."/>
            <person name="Liu B.Y."/>
            <person name="Huang S.W."/>
            <person name="Kuo C.J."/>
            <person name="Ruan J.W."/>
            <person name="Lin Y.H."/>
            <person name="Huang C.R."/>
            <person name="Chen Y.H."/>
            <person name="Wang H.D."/>
            <person name="Aroian R.V."/>
            <person name="Chen C.S."/>
        </authorList>
    </citation>
    <scope>FUNCTION</scope>
    <scope>DISRUPTION PHENOTYPE</scope>
</reference>
<reference evidence="9" key="7">
    <citation type="journal article" date="2023" name="Elife">
        <title>LGG-1/GABARAP lipidation is not required for autophagy and development in Caenorhabditis elegans.</title>
        <authorList>
            <person name="Leboutet R."/>
            <person name="Largeau C."/>
            <person name="Mueller L."/>
            <person name="Prigent M."/>
            <person name="Quinet G."/>
            <person name="Rodriguez M.S."/>
            <person name="Cuif M.H."/>
            <person name="Hoppe T."/>
            <person name="Culetto E."/>
            <person name="Lefebvre C."/>
            <person name="Legouis R."/>
        </authorList>
    </citation>
    <scope>FUNCTION</scope>
    <scope>SUBCELLULAR LOCATION</scope>
    <scope>DEVELOPMENTAL STAGE</scope>
    <scope>DISRUPTION PHENOTYPE</scope>
</reference>
<reference key="8">
    <citation type="journal article" date="2015" name="Mol. Cell">
        <title>Structural Basis of the Differential Function of the Two C. elegans Atg8 Homologs, LGG-1 and LGG-2, in Autophagy.</title>
        <authorList>
            <person name="Wu F."/>
            <person name="Watanabe Y."/>
            <person name="Guo X.Y."/>
            <person name="Qi X."/>
            <person name="Wang P."/>
            <person name="Zhao H.Y."/>
            <person name="Wang Z."/>
            <person name="Fujioka Y."/>
            <person name="Zhang H."/>
            <person name="Ren J.Q."/>
            <person name="Fang T.C."/>
            <person name="Shen Y.X."/>
            <person name="Feng W."/>
            <person name="Hu J.J."/>
            <person name="Noda N.N."/>
            <person name="Zhang H."/>
        </authorList>
    </citation>
    <scope>X-RAY CRYSTALLOGRAPHY (1.80 ANGSTROMS) OF 17-130 IN COMPLEX WITH WEEL PEPTIDE</scope>
    <scope>FUNCTION</scope>
    <scope>INTERACTION WITH LGG-3; ATG-16.1; ATG-16.2; SEPA-1; SQST-1; EPG-2; ATG-7 AND ATG-3</scope>
    <scope>SUBCELLULAR LOCATION</scope>
    <scope>LIPIDATION</scope>
    <scope>MUTAGENESIS OF 20-ARG-ARG-21; ARG-26 AND ASP-116</scope>
</reference>
<keyword id="KW-0002">3D-structure</keyword>
<keyword id="KW-0072">Autophagy</keyword>
<keyword id="KW-1003">Cell membrane</keyword>
<keyword id="KW-0963">Cytoplasm</keyword>
<keyword id="KW-0968">Cytoplasmic vesicle</keyword>
<keyword id="KW-0449">Lipoprotein</keyword>
<keyword id="KW-0472">Membrane</keyword>
<keyword id="KW-1185">Reference proteome</keyword>
<accession>Q23536</accession>
<proteinExistence type="evidence at protein level"/>
<evidence type="ECO:0000250" key="1">
    <source>
        <dbReference type="UniProtKB" id="P60520"/>
    </source>
</evidence>
<evidence type="ECO:0000269" key="2">
    <source>
    </source>
</evidence>
<evidence type="ECO:0000269" key="3">
    <source>
    </source>
</evidence>
<evidence type="ECO:0000269" key="4">
    <source>
    </source>
</evidence>
<evidence type="ECO:0000269" key="5">
    <source>
    </source>
</evidence>
<evidence type="ECO:0000269" key="6">
    <source>
    </source>
</evidence>
<evidence type="ECO:0000269" key="7">
    <source>
    </source>
</evidence>
<evidence type="ECO:0000269" key="8">
    <source>
    </source>
</evidence>
<evidence type="ECO:0000305" key="9"/>
<evidence type="ECO:0000305" key="10">
    <source>
    </source>
</evidence>
<evidence type="ECO:0000312" key="11">
    <source>
        <dbReference type="WormBase" id="ZK593.6a"/>
    </source>
</evidence>
<evidence type="ECO:0007829" key="12">
    <source>
        <dbReference type="PDB" id="5E6O"/>
    </source>
</evidence>
<feature type="chain" id="PRO_0000212378" description="Protein lgg-2">
    <location>
        <begin position="1"/>
        <end position="130"/>
    </location>
</feature>
<feature type="lipid moiety-binding region" description="Phosphatidylethanolamine amidated glycine" evidence="1">
    <location>
        <position position="130"/>
    </location>
</feature>
<feature type="mutagenesis site" description="Impairs tethering between adjacent membranes." evidence="6">
    <original>RR</original>
    <variation>AA</variation>
    <location>
        <begin position="20"/>
        <end position="21"/>
    </location>
</feature>
<feature type="mutagenesis site" description="Does not rescue the degradation defect in the lgg-2 bp556 mutant." evidence="6">
    <original>R</original>
    <variation>A</variation>
    <location>
        <position position="26"/>
    </location>
</feature>
<feature type="mutagenesis site" description="In bp556; defective degradation of protein aggregates during embryogenesis and early larval stages with an accumulation of sqst-1-containing aggregates in embryos and up until the L1 stage of larval development." evidence="6">
    <original>R</original>
    <variation>C</variation>
    <location>
        <position position="26"/>
    </location>
</feature>
<feature type="mutagenesis site" description="Does not rescue the degradation defect in the lgg-2 bp556 mutant." evidence="6">
    <original>D</original>
    <variation>A</variation>
    <location>
        <position position="116"/>
    </location>
</feature>
<feature type="mutagenesis site" description="Diffuse cytosolic localization in 500-cell embryos with no punctate pattern of distribution which is in contrast to wild-type." evidence="4">
    <original>G</original>
    <variation>A</variation>
    <location>
        <position position="130"/>
    </location>
</feature>
<feature type="helix" evidence="12">
    <location>
        <begin position="17"/>
        <end position="20"/>
    </location>
</feature>
<feature type="helix" evidence="12">
    <location>
        <begin position="23"/>
        <end position="36"/>
    </location>
</feature>
<feature type="strand" evidence="12">
    <location>
        <begin position="40"/>
        <end position="47"/>
    </location>
</feature>
<feature type="strand" evidence="12">
    <location>
        <begin position="61"/>
        <end position="65"/>
    </location>
</feature>
<feature type="helix" evidence="12">
    <location>
        <begin position="70"/>
        <end position="81"/>
    </location>
</feature>
<feature type="strand" evidence="12">
    <location>
        <begin position="90"/>
        <end position="93"/>
    </location>
</feature>
<feature type="helix" evidence="12">
    <location>
        <begin position="105"/>
        <end position="112"/>
    </location>
</feature>
<feature type="strand" evidence="12">
    <location>
        <begin position="119"/>
        <end position="125"/>
    </location>
</feature>
<protein>
    <recommendedName>
        <fullName>Protein lgg-2</fullName>
    </recommendedName>
</protein>
<dbReference type="EMBL" id="Z69385">
    <property type="protein sequence ID" value="CAA93421.1"/>
    <property type="molecule type" value="Genomic_DNA"/>
</dbReference>
<dbReference type="PIR" id="T27920">
    <property type="entry name" value="T27920"/>
</dbReference>
<dbReference type="RefSeq" id="NP_001255523.2">
    <property type="nucleotide sequence ID" value="NM_001268594.2"/>
</dbReference>
<dbReference type="PDB" id="5AZH">
    <property type="method" value="X-ray"/>
    <property type="resolution" value="2.30 A"/>
    <property type="chains" value="A=11-130"/>
</dbReference>
<dbReference type="PDB" id="5E6N">
    <property type="method" value="X-ray"/>
    <property type="resolution" value="2.10 A"/>
    <property type="chains" value="A/B=17-130"/>
</dbReference>
<dbReference type="PDB" id="5E6O">
    <property type="method" value="X-ray"/>
    <property type="resolution" value="1.80 A"/>
    <property type="chains" value="A/B/C/D=17-130"/>
</dbReference>
<dbReference type="PDBsum" id="5AZH"/>
<dbReference type="PDBsum" id="5E6N"/>
<dbReference type="PDBsum" id="5E6O"/>
<dbReference type="SMR" id="Q23536"/>
<dbReference type="BioGRID" id="43089">
    <property type="interactions" value="20"/>
</dbReference>
<dbReference type="DIP" id="DIP-25399N"/>
<dbReference type="FunCoup" id="Q23536">
    <property type="interactions" value="761"/>
</dbReference>
<dbReference type="IntAct" id="Q23536">
    <property type="interactions" value="9"/>
</dbReference>
<dbReference type="STRING" id="6239.ZK593.6a.1"/>
<dbReference type="PaxDb" id="6239-ZK593.6a"/>
<dbReference type="PeptideAtlas" id="Q23536"/>
<dbReference type="EnsemblMetazoa" id="ZK593.6a.1">
    <property type="protein sequence ID" value="ZK593.6a.1"/>
    <property type="gene ID" value="WBGene00002981"/>
</dbReference>
<dbReference type="GeneID" id="177989"/>
<dbReference type="KEGG" id="cel:CELE_ZK593.6"/>
<dbReference type="UCSC" id="ZK593.6.1">
    <property type="organism name" value="c. elegans"/>
</dbReference>
<dbReference type="AGR" id="WB:WBGene00002981"/>
<dbReference type="CTD" id="177989"/>
<dbReference type="WormBase" id="ZK593.6a">
    <property type="protein sequence ID" value="CE50405"/>
    <property type="gene ID" value="WBGene00002981"/>
    <property type="gene designation" value="lgg-2"/>
</dbReference>
<dbReference type="eggNOG" id="KOG1654">
    <property type="taxonomic scope" value="Eukaryota"/>
</dbReference>
<dbReference type="GeneTree" id="ENSGT00940000174218"/>
<dbReference type="HOGENOM" id="CLU_119276_1_1_1"/>
<dbReference type="InParanoid" id="Q23536"/>
<dbReference type="OrthoDB" id="6738456at2759"/>
<dbReference type="PhylomeDB" id="Q23536"/>
<dbReference type="Reactome" id="R-CEL-1632852">
    <property type="pathway name" value="Macroautophagy"/>
</dbReference>
<dbReference type="Reactome" id="R-CEL-5205685">
    <property type="pathway name" value="PINK1-PRKN Mediated Mitophagy"/>
</dbReference>
<dbReference type="Reactome" id="R-CEL-8934903">
    <property type="pathway name" value="Receptor Mediated Mitophagy"/>
</dbReference>
<dbReference type="Reactome" id="R-CEL-9755511">
    <property type="pathway name" value="KEAP1-NFE2L2 pathway"/>
</dbReference>
<dbReference type="SignaLink" id="Q23536"/>
<dbReference type="EvolutionaryTrace" id="Q23536"/>
<dbReference type="PRO" id="PR:Q23536"/>
<dbReference type="Proteomes" id="UP000001940">
    <property type="component" value="Chromosome IV"/>
</dbReference>
<dbReference type="Bgee" id="WBGene00002981">
    <property type="expression patterns" value="Expressed in pharyngeal muscle cell (C elegans) and 4 other cell types or tissues"/>
</dbReference>
<dbReference type="ExpressionAtlas" id="Q23536">
    <property type="expression patterns" value="baseline and differential"/>
</dbReference>
<dbReference type="GO" id="GO:0000421">
    <property type="term" value="C:autophagosome membrane"/>
    <property type="evidence" value="ECO:0000314"/>
    <property type="project" value="WormBase"/>
</dbReference>
<dbReference type="GO" id="GO:0005737">
    <property type="term" value="C:cytoplasm"/>
    <property type="evidence" value="ECO:0000314"/>
    <property type="project" value="WormBase"/>
</dbReference>
<dbReference type="GO" id="GO:0031410">
    <property type="term" value="C:cytoplasmic vesicle"/>
    <property type="evidence" value="ECO:0007669"/>
    <property type="project" value="UniProtKB-KW"/>
</dbReference>
<dbReference type="GO" id="GO:0005886">
    <property type="term" value="C:plasma membrane"/>
    <property type="evidence" value="ECO:0007669"/>
    <property type="project" value="UniProtKB-SubCell"/>
</dbReference>
<dbReference type="GO" id="GO:0008017">
    <property type="term" value="F:microtubule binding"/>
    <property type="evidence" value="ECO:0000318"/>
    <property type="project" value="GO_Central"/>
</dbReference>
<dbReference type="GO" id="GO:0008429">
    <property type="term" value="F:phosphatidylethanolamine binding"/>
    <property type="evidence" value="ECO:0000318"/>
    <property type="project" value="GO_Central"/>
</dbReference>
<dbReference type="GO" id="GO:0031625">
    <property type="term" value="F:ubiquitin protein ligase binding"/>
    <property type="evidence" value="ECO:0000318"/>
    <property type="project" value="GO_Central"/>
</dbReference>
<dbReference type="GO" id="GO:0000045">
    <property type="term" value="P:autophagosome assembly"/>
    <property type="evidence" value="ECO:0000318"/>
    <property type="project" value="GO_Central"/>
</dbReference>
<dbReference type="GO" id="GO:0097352">
    <property type="term" value="P:autophagosome maturation"/>
    <property type="evidence" value="ECO:0000318"/>
    <property type="project" value="GO_Central"/>
</dbReference>
<dbReference type="GO" id="GO:0006995">
    <property type="term" value="P:cellular response to nitrogen starvation"/>
    <property type="evidence" value="ECO:0000318"/>
    <property type="project" value="GO_Central"/>
</dbReference>
<dbReference type="GO" id="GO:0097237">
    <property type="term" value="P:cellular response to toxic substance"/>
    <property type="evidence" value="ECO:0000315"/>
    <property type="project" value="UniProtKB"/>
</dbReference>
<dbReference type="GO" id="GO:0050830">
    <property type="term" value="P:defense response to Gram-positive bacterium"/>
    <property type="evidence" value="ECO:0000270"/>
    <property type="project" value="WormBase"/>
</dbReference>
<dbReference type="GO" id="GO:0000423">
    <property type="term" value="P:mitophagy"/>
    <property type="evidence" value="ECO:0000318"/>
    <property type="project" value="GO_Central"/>
</dbReference>
<dbReference type="GO" id="GO:0001778">
    <property type="term" value="P:plasma membrane repair"/>
    <property type="evidence" value="ECO:0000315"/>
    <property type="project" value="UniProtKB"/>
</dbReference>
<dbReference type="GO" id="GO:1901098">
    <property type="term" value="P:positive regulation of autophagosome maturation"/>
    <property type="evidence" value="ECO:0000315"/>
    <property type="project" value="UniProtKB"/>
</dbReference>
<dbReference type="GO" id="GO:0098792">
    <property type="term" value="P:xenophagy"/>
    <property type="evidence" value="ECO:0000315"/>
    <property type="project" value="UniProtKB"/>
</dbReference>
<dbReference type="CDD" id="cd16129">
    <property type="entry name" value="Ubl_ATG8_MAP1LC3"/>
    <property type="match status" value="1"/>
</dbReference>
<dbReference type="FunFam" id="3.10.20.90:FF:000149">
    <property type="entry name" value="microtubule-associated proteins 1A/1B light chain 3C"/>
    <property type="match status" value="1"/>
</dbReference>
<dbReference type="Gene3D" id="3.10.20.90">
    <property type="entry name" value="Phosphatidylinositol 3-kinase Catalytic Subunit, Chain A, domain 1"/>
    <property type="match status" value="1"/>
</dbReference>
<dbReference type="InterPro" id="IPR004241">
    <property type="entry name" value="Atg8-like"/>
</dbReference>
<dbReference type="InterPro" id="IPR029071">
    <property type="entry name" value="Ubiquitin-like_domsf"/>
</dbReference>
<dbReference type="PANTHER" id="PTHR10969">
    <property type="entry name" value="MICROTUBULE-ASSOCIATED PROTEINS 1A/1B LIGHT CHAIN 3-RELATED"/>
    <property type="match status" value="1"/>
</dbReference>
<dbReference type="Pfam" id="PF02991">
    <property type="entry name" value="ATG8"/>
    <property type="match status" value="1"/>
</dbReference>
<dbReference type="SUPFAM" id="SSF54236">
    <property type="entry name" value="Ubiquitin-like"/>
    <property type="match status" value="1"/>
</dbReference>